<dbReference type="EMBL" id="FM211187">
    <property type="protein sequence ID" value="CAR68066.1"/>
    <property type="molecule type" value="Genomic_DNA"/>
</dbReference>
<dbReference type="RefSeq" id="WP_000960946.1">
    <property type="nucleotide sequence ID" value="NC_011900.1"/>
</dbReference>
<dbReference type="SMR" id="B8ZKG4"/>
<dbReference type="GeneID" id="93738964"/>
<dbReference type="KEGG" id="sne:SPN23F02060"/>
<dbReference type="HOGENOM" id="CLU_078858_2_1_9"/>
<dbReference type="GO" id="GO:0022625">
    <property type="term" value="C:cytosolic large ribosomal subunit"/>
    <property type="evidence" value="ECO:0007669"/>
    <property type="project" value="TreeGrafter"/>
</dbReference>
<dbReference type="GO" id="GO:0019843">
    <property type="term" value="F:rRNA binding"/>
    <property type="evidence" value="ECO:0007669"/>
    <property type="project" value="UniProtKB-UniRule"/>
</dbReference>
<dbReference type="GO" id="GO:0003735">
    <property type="term" value="F:structural constituent of ribosome"/>
    <property type="evidence" value="ECO:0007669"/>
    <property type="project" value="InterPro"/>
</dbReference>
<dbReference type="GO" id="GO:0000049">
    <property type="term" value="F:tRNA binding"/>
    <property type="evidence" value="ECO:0007669"/>
    <property type="project" value="UniProtKB-KW"/>
</dbReference>
<dbReference type="GO" id="GO:0006412">
    <property type="term" value="P:translation"/>
    <property type="evidence" value="ECO:0007669"/>
    <property type="project" value="UniProtKB-UniRule"/>
</dbReference>
<dbReference type="CDD" id="cd01433">
    <property type="entry name" value="Ribosomal_L16_L10e"/>
    <property type="match status" value="1"/>
</dbReference>
<dbReference type="FunFam" id="3.90.1170.10:FF:000001">
    <property type="entry name" value="50S ribosomal protein L16"/>
    <property type="match status" value="1"/>
</dbReference>
<dbReference type="Gene3D" id="3.90.1170.10">
    <property type="entry name" value="Ribosomal protein L10e/L16"/>
    <property type="match status" value="1"/>
</dbReference>
<dbReference type="HAMAP" id="MF_01342">
    <property type="entry name" value="Ribosomal_uL16"/>
    <property type="match status" value="1"/>
</dbReference>
<dbReference type="InterPro" id="IPR047873">
    <property type="entry name" value="Ribosomal_uL16"/>
</dbReference>
<dbReference type="InterPro" id="IPR000114">
    <property type="entry name" value="Ribosomal_uL16_bact-type"/>
</dbReference>
<dbReference type="InterPro" id="IPR020798">
    <property type="entry name" value="Ribosomal_uL16_CS"/>
</dbReference>
<dbReference type="InterPro" id="IPR016180">
    <property type="entry name" value="Ribosomal_uL16_dom"/>
</dbReference>
<dbReference type="InterPro" id="IPR036920">
    <property type="entry name" value="Ribosomal_uL16_sf"/>
</dbReference>
<dbReference type="NCBIfam" id="TIGR01164">
    <property type="entry name" value="rplP_bact"/>
    <property type="match status" value="1"/>
</dbReference>
<dbReference type="PANTHER" id="PTHR12220">
    <property type="entry name" value="50S/60S RIBOSOMAL PROTEIN L16"/>
    <property type="match status" value="1"/>
</dbReference>
<dbReference type="PANTHER" id="PTHR12220:SF13">
    <property type="entry name" value="LARGE RIBOSOMAL SUBUNIT PROTEIN UL16M"/>
    <property type="match status" value="1"/>
</dbReference>
<dbReference type="Pfam" id="PF00252">
    <property type="entry name" value="Ribosomal_L16"/>
    <property type="match status" value="1"/>
</dbReference>
<dbReference type="PRINTS" id="PR00060">
    <property type="entry name" value="RIBOSOMALL16"/>
</dbReference>
<dbReference type="SUPFAM" id="SSF54686">
    <property type="entry name" value="Ribosomal protein L16p/L10e"/>
    <property type="match status" value="1"/>
</dbReference>
<dbReference type="PROSITE" id="PS00586">
    <property type="entry name" value="RIBOSOMAL_L16_1"/>
    <property type="match status" value="1"/>
</dbReference>
<dbReference type="PROSITE" id="PS00701">
    <property type="entry name" value="RIBOSOMAL_L16_2"/>
    <property type="match status" value="1"/>
</dbReference>
<name>RL16_STRPJ</name>
<feature type="chain" id="PRO_1000166381" description="Large ribosomal subunit protein uL16">
    <location>
        <begin position="1"/>
        <end position="137"/>
    </location>
</feature>
<comment type="function">
    <text evidence="1">Binds 23S rRNA and is also seen to make contacts with the A and possibly P site tRNAs.</text>
</comment>
<comment type="subunit">
    <text evidence="1">Part of the 50S ribosomal subunit.</text>
</comment>
<comment type="similarity">
    <text evidence="1">Belongs to the universal ribosomal protein uL16 family.</text>
</comment>
<accession>B8ZKG4</accession>
<gene>
    <name evidence="1" type="primary">rplP</name>
    <name type="ordered locus">SPN23F02060</name>
</gene>
<evidence type="ECO:0000255" key="1">
    <source>
        <dbReference type="HAMAP-Rule" id="MF_01342"/>
    </source>
</evidence>
<evidence type="ECO:0000305" key="2"/>
<proteinExistence type="inferred from homology"/>
<reference key="1">
    <citation type="journal article" date="2009" name="J. Bacteriol.">
        <title>Role of conjugative elements in the evolution of the multidrug-resistant pandemic clone Streptococcus pneumoniae Spain23F ST81.</title>
        <authorList>
            <person name="Croucher N.J."/>
            <person name="Walker D."/>
            <person name="Romero P."/>
            <person name="Lennard N."/>
            <person name="Paterson G.K."/>
            <person name="Bason N.C."/>
            <person name="Mitchell A.M."/>
            <person name="Quail M.A."/>
            <person name="Andrew P.W."/>
            <person name="Parkhill J."/>
            <person name="Bentley S.D."/>
            <person name="Mitchell T.J."/>
        </authorList>
    </citation>
    <scope>NUCLEOTIDE SEQUENCE [LARGE SCALE GENOMIC DNA]</scope>
    <source>
        <strain>ATCC 700669 / Spain 23F-1</strain>
    </source>
</reference>
<sequence>MLVPKRVKHRREFRGKMRGEAKGGKEVAFGEYGLQATTSHWITNRQIEAARIAMTRYMKRGGKVWIKIFPHKSYTAKAIGVRMGSGKGAPEGWVAPVKRGKVMFEIAGVSEEIAREALRLASHKLPVKCKFVKREAE</sequence>
<protein>
    <recommendedName>
        <fullName evidence="1">Large ribosomal subunit protein uL16</fullName>
    </recommendedName>
    <alternativeName>
        <fullName evidence="2">50S ribosomal protein L16</fullName>
    </alternativeName>
</protein>
<keyword id="KW-0687">Ribonucleoprotein</keyword>
<keyword id="KW-0689">Ribosomal protein</keyword>
<keyword id="KW-0694">RNA-binding</keyword>
<keyword id="KW-0699">rRNA-binding</keyword>
<keyword id="KW-0820">tRNA-binding</keyword>
<organism>
    <name type="scientific">Streptococcus pneumoniae (strain ATCC 700669 / Spain 23F-1)</name>
    <dbReference type="NCBI Taxonomy" id="561276"/>
    <lineage>
        <taxon>Bacteria</taxon>
        <taxon>Bacillati</taxon>
        <taxon>Bacillota</taxon>
        <taxon>Bacilli</taxon>
        <taxon>Lactobacillales</taxon>
        <taxon>Streptococcaceae</taxon>
        <taxon>Streptococcus</taxon>
    </lineage>
</organism>